<accession>A6TBC7</accession>
<dbReference type="EC" id="5.3.1.16" evidence="1"/>
<dbReference type="EMBL" id="CP000647">
    <property type="protein sequence ID" value="ABR77898.1"/>
    <property type="molecule type" value="Genomic_DNA"/>
</dbReference>
<dbReference type="RefSeq" id="WP_015958687.1">
    <property type="nucleotide sequence ID" value="NC_009648.1"/>
</dbReference>
<dbReference type="SMR" id="A6TBC7"/>
<dbReference type="STRING" id="272620.KPN_02480"/>
<dbReference type="jPOST" id="A6TBC7"/>
<dbReference type="PaxDb" id="272620-KPN_02480"/>
<dbReference type="EnsemblBacteria" id="ABR77898">
    <property type="protein sequence ID" value="ABR77898"/>
    <property type="gene ID" value="KPN_02480"/>
</dbReference>
<dbReference type="KEGG" id="kpn:KPN_02480"/>
<dbReference type="HOGENOM" id="CLU_048577_1_2_6"/>
<dbReference type="UniPathway" id="UPA00031">
    <property type="reaction ID" value="UER00009"/>
</dbReference>
<dbReference type="Proteomes" id="UP000000265">
    <property type="component" value="Chromosome"/>
</dbReference>
<dbReference type="GO" id="GO:0005737">
    <property type="term" value="C:cytoplasm"/>
    <property type="evidence" value="ECO:0007669"/>
    <property type="project" value="UniProtKB-SubCell"/>
</dbReference>
<dbReference type="GO" id="GO:0003949">
    <property type="term" value="F:1-(5-phosphoribosyl)-5-[(5-phosphoribosylamino)methylideneamino]imidazole-4-carboxamide isomerase activity"/>
    <property type="evidence" value="ECO:0007669"/>
    <property type="project" value="UniProtKB-UniRule"/>
</dbReference>
<dbReference type="GO" id="GO:0000105">
    <property type="term" value="P:L-histidine biosynthetic process"/>
    <property type="evidence" value="ECO:0007669"/>
    <property type="project" value="UniProtKB-UniRule"/>
</dbReference>
<dbReference type="GO" id="GO:0000162">
    <property type="term" value="P:L-tryptophan biosynthetic process"/>
    <property type="evidence" value="ECO:0007669"/>
    <property type="project" value="TreeGrafter"/>
</dbReference>
<dbReference type="CDD" id="cd04732">
    <property type="entry name" value="HisA"/>
    <property type="match status" value="1"/>
</dbReference>
<dbReference type="FunFam" id="3.20.20.70:FF:000009">
    <property type="entry name" value="1-(5-phosphoribosyl)-5-[(5-phosphoribosylamino)methylideneamino] imidazole-4-carboxamide isomerase"/>
    <property type="match status" value="1"/>
</dbReference>
<dbReference type="Gene3D" id="3.20.20.70">
    <property type="entry name" value="Aldolase class I"/>
    <property type="match status" value="1"/>
</dbReference>
<dbReference type="HAMAP" id="MF_01014">
    <property type="entry name" value="HisA"/>
    <property type="match status" value="1"/>
</dbReference>
<dbReference type="InterPro" id="IPR013785">
    <property type="entry name" value="Aldolase_TIM"/>
</dbReference>
<dbReference type="InterPro" id="IPR006062">
    <property type="entry name" value="His_biosynth"/>
</dbReference>
<dbReference type="InterPro" id="IPR006063">
    <property type="entry name" value="HisA_bact_arch"/>
</dbReference>
<dbReference type="InterPro" id="IPR044524">
    <property type="entry name" value="Isoase_HisA-like"/>
</dbReference>
<dbReference type="InterPro" id="IPR023016">
    <property type="entry name" value="Isoase_HisA-like_bact"/>
</dbReference>
<dbReference type="InterPro" id="IPR011060">
    <property type="entry name" value="RibuloseP-bd_barrel"/>
</dbReference>
<dbReference type="NCBIfam" id="TIGR00007">
    <property type="entry name" value="1-(5-phosphoribosyl)-5-[(5-phosphoribosylamino)methylideneamino]imidazole-4-carboxamide isomerase"/>
    <property type="match status" value="1"/>
</dbReference>
<dbReference type="PANTHER" id="PTHR43090">
    <property type="entry name" value="1-(5-PHOSPHORIBOSYL)-5-[(5-PHOSPHORIBOSYLAMINO)METHYLIDENEAMINO] IMIDAZOLE-4-CARBOXAMIDE ISOMERASE"/>
    <property type="match status" value="1"/>
</dbReference>
<dbReference type="PANTHER" id="PTHR43090:SF2">
    <property type="entry name" value="1-(5-PHOSPHORIBOSYL)-5-[(5-PHOSPHORIBOSYLAMINO)METHYLIDENEAMINO] IMIDAZOLE-4-CARBOXAMIDE ISOMERASE"/>
    <property type="match status" value="1"/>
</dbReference>
<dbReference type="Pfam" id="PF00977">
    <property type="entry name" value="His_biosynth"/>
    <property type="match status" value="1"/>
</dbReference>
<dbReference type="SUPFAM" id="SSF51366">
    <property type="entry name" value="Ribulose-phoshate binding barrel"/>
    <property type="match status" value="1"/>
</dbReference>
<evidence type="ECO:0000255" key="1">
    <source>
        <dbReference type="HAMAP-Rule" id="MF_01014"/>
    </source>
</evidence>
<feature type="chain" id="PRO_1000063214" description="1-(5-phosphoribosyl)-5-[(5-phosphoribosylamino)methylideneamino] imidazole-4-carboxamide isomerase">
    <location>
        <begin position="1"/>
        <end position="245"/>
    </location>
</feature>
<feature type="active site" description="Proton acceptor" evidence="1">
    <location>
        <position position="7"/>
    </location>
</feature>
<feature type="active site" description="Proton donor" evidence="1">
    <location>
        <position position="129"/>
    </location>
</feature>
<proteinExistence type="inferred from homology"/>
<name>HIS4_KLEP7</name>
<gene>
    <name evidence="1" type="primary">hisA</name>
    <name type="ordered locus">KPN78578_24370</name>
    <name type="ORF">KPN_02480</name>
</gene>
<sequence length="245" mass="25995">MIIPALDLIDGTVVRLHQGDYGQQRDYGSDPLPRLQAYAAQGAKVLHLVDLTGAKDPAKRQIPLLKSLVAGVDVPVQVGGGVRTEADVAALLEAGVARVVVGSTAVKSPEEVKGWFKRFGPERLVLALDVRIDADGNKQVAVSGWQENSGVTLEELVESYLPVGLQHVLCTDISRDGTLAGSNVSLYEEVCARYPQVAFQSSGGIGDLKDIAALRGTGVRGVIVGRALLEGKFNVTEAIQCWQNG</sequence>
<protein>
    <recommendedName>
        <fullName evidence="1">1-(5-phosphoribosyl)-5-[(5-phosphoribosylamino)methylideneamino] imidazole-4-carboxamide isomerase</fullName>
        <ecNumber evidence="1">5.3.1.16</ecNumber>
    </recommendedName>
    <alternativeName>
        <fullName evidence="1">Phosphoribosylformimino-5-aminoimidazole carboxamide ribotide isomerase</fullName>
    </alternativeName>
</protein>
<organism>
    <name type="scientific">Klebsiella pneumoniae subsp. pneumoniae (strain ATCC 700721 / MGH 78578)</name>
    <dbReference type="NCBI Taxonomy" id="272620"/>
    <lineage>
        <taxon>Bacteria</taxon>
        <taxon>Pseudomonadati</taxon>
        <taxon>Pseudomonadota</taxon>
        <taxon>Gammaproteobacteria</taxon>
        <taxon>Enterobacterales</taxon>
        <taxon>Enterobacteriaceae</taxon>
        <taxon>Klebsiella/Raoultella group</taxon>
        <taxon>Klebsiella</taxon>
        <taxon>Klebsiella pneumoniae complex</taxon>
    </lineage>
</organism>
<keyword id="KW-0028">Amino-acid biosynthesis</keyword>
<keyword id="KW-0963">Cytoplasm</keyword>
<keyword id="KW-0368">Histidine biosynthesis</keyword>
<keyword id="KW-0413">Isomerase</keyword>
<reference key="1">
    <citation type="submission" date="2006-09" db="EMBL/GenBank/DDBJ databases">
        <authorList>
            <consortium name="The Klebsiella pneumonia Genome Sequencing Project"/>
            <person name="McClelland M."/>
            <person name="Sanderson E.K."/>
            <person name="Spieth J."/>
            <person name="Clifton W.S."/>
            <person name="Latreille P."/>
            <person name="Sabo A."/>
            <person name="Pepin K."/>
            <person name="Bhonagiri V."/>
            <person name="Porwollik S."/>
            <person name="Ali J."/>
            <person name="Wilson R.K."/>
        </authorList>
    </citation>
    <scope>NUCLEOTIDE SEQUENCE [LARGE SCALE GENOMIC DNA]</scope>
    <source>
        <strain>ATCC 700721 / MGH 78578</strain>
    </source>
</reference>
<comment type="catalytic activity">
    <reaction evidence="1">
        <text>1-(5-phospho-beta-D-ribosyl)-5-[(5-phospho-beta-D-ribosylamino)methylideneamino]imidazole-4-carboxamide = 5-[(5-phospho-1-deoxy-D-ribulos-1-ylimino)methylamino]-1-(5-phospho-beta-D-ribosyl)imidazole-4-carboxamide</text>
        <dbReference type="Rhea" id="RHEA:15469"/>
        <dbReference type="ChEBI" id="CHEBI:58435"/>
        <dbReference type="ChEBI" id="CHEBI:58525"/>
        <dbReference type="EC" id="5.3.1.16"/>
    </reaction>
</comment>
<comment type="pathway">
    <text evidence="1">Amino-acid biosynthesis; L-histidine biosynthesis; L-histidine from 5-phospho-alpha-D-ribose 1-diphosphate: step 4/9.</text>
</comment>
<comment type="subcellular location">
    <subcellularLocation>
        <location evidence="1">Cytoplasm</location>
    </subcellularLocation>
</comment>
<comment type="similarity">
    <text evidence="1">Belongs to the HisA/HisF family.</text>
</comment>